<proteinExistence type="inferred from homology"/>
<comment type="function">
    <text evidence="1">An aminoacyl-tRNA editing enzyme that deacylates mischarged D-aminoacyl-tRNAs. Also deacylates mischarged glycyl-tRNA(Ala), protecting cells against glycine mischarging by AlaRS. Acts via tRNA-based rather than protein-based catalysis; rejects L-amino acids rather than detecting D-amino acids in the active site. By recycling D-aminoacyl-tRNA to D-amino acids and free tRNA molecules, this enzyme counteracts the toxicity associated with the formation of D-aminoacyl-tRNA entities in vivo and helps enforce protein L-homochirality.</text>
</comment>
<comment type="catalytic activity">
    <reaction evidence="1">
        <text>glycyl-tRNA(Ala) + H2O = tRNA(Ala) + glycine + H(+)</text>
        <dbReference type="Rhea" id="RHEA:53744"/>
        <dbReference type="Rhea" id="RHEA-COMP:9657"/>
        <dbReference type="Rhea" id="RHEA-COMP:13640"/>
        <dbReference type="ChEBI" id="CHEBI:15377"/>
        <dbReference type="ChEBI" id="CHEBI:15378"/>
        <dbReference type="ChEBI" id="CHEBI:57305"/>
        <dbReference type="ChEBI" id="CHEBI:78442"/>
        <dbReference type="ChEBI" id="CHEBI:78522"/>
        <dbReference type="EC" id="3.1.1.96"/>
    </reaction>
</comment>
<comment type="catalytic activity">
    <reaction evidence="1">
        <text>a D-aminoacyl-tRNA + H2O = a tRNA + a D-alpha-amino acid + H(+)</text>
        <dbReference type="Rhea" id="RHEA:13953"/>
        <dbReference type="Rhea" id="RHEA-COMP:10123"/>
        <dbReference type="Rhea" id="RHEA-COMP:10124"/>
        <dbReference type="ChEBI" id="CHEBI:15377"/>
        <dbReference type="ChEBI" id="CHEBI:15378"/>
        <dbReference type="ChEBI" id="CHEBI:59871"/>
        <dbReference type="ChEBI" id="CHEBI:78442"/>
        <dbReference type="ChEBI" id="CHEBI:79333"/>
        <dbReference type="EC" id="3.1.1.96"/>
    </reaction>
</comment>
<comment type="subunit">
    <text evidence="1">Homodimer.</text>
</comment>
<comment type="subcellular location">
    <subcellularLocation>
        <location evidence="1">Cytoplasm</location>
    </subcellularLocation>
</comment>
<comment type="domain">
    <text evidence="1">A Gly-cisPro motif from one monomer fits into the active site of the other monomer to allow specific chiral rejection of L-amino acids.</text>
</comment>
<comment type="similarity">
    <text evidence="1">Belongs to the DTD family.</text>
</comment>
<evidence type="ECO:0000255" key="1">
    <source>
        <dbReference type="HAMAP-Rule" id="MF_00518"/>
    </source>
</evidence>
<protein>
    <recommendedName>
        <fullName evidence="1">D-aminoacyl-tRNA deacylase</fullName>
        <shortName evidence="1">DTD</shortName>
        <ecNumber evidence="1">3.1.1.96</ecNumber>
    </recommendedName>
    <alternativeName>
        <fullName evidence="1">Gly-tRNA(Ala) deacylase</fullName>
    </alternativeName>
</protein>
<reference key="1">
    <citation type="journal article" date="2010" name="PLoS ONE">
        <title>The complete multipartite genome sequence of Cupriavidus necator JMP134, a versatile pollutant degrader.</title>
        <authorList>
            <person name="Lykidis A."/>
            <person name="Perez-Pantoja D."/>
            <person name="Ledger T."/>
            <person name="Mavromatis K."/>
            <person name="Anderson I.J."/>
            <person name="Ivanova N.N."/>
            <person name="Hooper S.D."/>
            <person name="Lapidus A."/>
            <person name="Lucas S."/>
            <person name="Gonzalez B."/>
            <person name="Kyrpides N.C."/>
        </authorList>
    </citation>
    <scope>NUCLEOTIDE SEQUENCE [LARGE SCALE GENOMIC DNA]</scope>
    <source>
        <strain>JMP134 / LMG 1197</strain>
    </source>
</reference>
<feature type="chain" id="PRO_0000259301" description="D-aminoacyl-tRNA deacylase">
    <location>
        <begin position="1"/>
        <end position="156"/>
    </location>
</feature>
<feature type="short sequence motif" description="Gly-cisPro motif, important for rejection of L-amino acids" evidence="1">
    <location>
        <begin position="142"/>
        <end position="143"/>
    </location>
</feature>
<dbReference type="EC" id="3.1.1.96" evidence="1"/>
<dbReference type="EMBL" id="CP000090">
    <property type="protein sequence ID" value="AAZ59859.1"/>
    <property type="molecule type" value="Genomic_DNA"/>
</dbReference>
<dbReference type="SMR" id="Q475S4"/>
<dbReference type="STRING" id="264198.Reut_A0477"/>
<dbReference type="KEGG" id="reu:Reut_A0477"/>
<dbReference type="eggNOG" id="COG1490">
    <property type="taxonomic scope" value="Bacteria"/>
</dbReference>
<dbReference type="HOGENOM" id="CLU_076901_1_1_4"/>
<dbReference type="OrthoDB" id="9801395at2"/>
<dbReference type="GO" id="GO:0005737">
    <property type="term" value="C:cytoplasm"/>
    <property type="evidence" value="ECO:0007669"/>
    <property type="project" value="UniProtKB-SubCell"/>
</dbReference>
<dbReference type="GO" id="GO:0051500">
    <property type="term" value="F:D-tyrosyl-tRNA(Tyr) deacylase activity"/>
    <property type="evidence" value="ECO:0007669"/>
    <property type="project" value="TreeGrafter"/>
</dbReference>
<dbReference type="GO" id="GO:0106026">
    <property type="term" value="F:Gly-tRNA(Ala) deacylase activity"/>
    <property type="evidence" value="ECO:0007669"/>
    <property type="project" value="UniProtKB-UniRule"/>
</dbReference>
<dbReference type="GO" id="GO:0043908">
    <property type="term" value="F:Ser(Gly)-tRNA(Ala) hydrolase activity"/>
    <property type="evidence" value="ECO:0007669"/>
    <property type="project" value="UniProtKB-UniRule"/>
</dbReference>
<dbReference type="GO" id="GO:0000049">
    <property type="term" value="F:tRNA binding"/>
    <property type="evidence" value="ECO:0007669"/>
    <property type="project" value="UniProtKB-UniRule"/>
</dbReference>
<dbReference type="GO" id="GO:0019478">
    <property type="term" value="P:D-amino acid catabolic process"/>
    <property type="evidence" value="ECO:0007669"/>
    <property type="project" value="UniProtKB-UniRule"/>
</dbReference>
<dbReference type="CDD" id="cd00563">
    <property type="entry name" value="Dtyr_deacylase"/>
    <property type="match status" value="1"/>
</dbReference>
<dbReference type="FunFam" id="3.50.80.10:FF:000001">
    <property type="entry name" value="D-aminoacyl-tRNA deacylase"/>
    <property type="match status" value="1"/>
</dbReference>
<dbReference type="Gene3D" id="3.50.80.10">
    <property type="entry name" value="D-tyrosyl-tRNA(Tyr) deacylase"/>
    <property type="match status" value="1"/>
</dbReference>
<dbReference type="HAMAP" id="MF_00518">
    <property type="entry name" value="Deacylase_Dtd"/>
    <property type="match status" value="1"/>
</dbReference>
<dbReference type="InterPro" id="IPR003732">
    <property type="entry name" value="Daa-tRNA_deacyls_DTD"/>
</dbReference>
<dbReference type="InterPro" id="IPR023509">
    <property type="entry name" value="DTD-like_sf"/>
</dbReference>
<dbReference type="NCBIfam" id="TIGR00256">
    <property type="entry name" value="D-aminoacyl-tRNA deacylase"/>
    <property type="match status" value="1"/>
</dbReference>
<dbReference type="PANTHER" id="PTHR10472:SF5">
    <property type="entry name" value="D-AMINOACYL-TRNA DEACYLASE 1"/>
    <property type="match status" value="1"/>
</dbReference>
<dbReference type="PANTHER" id="PTHR10472">
    <property type="entry name" value="D-TYROSYL-TRNA TYR DEACYLASE"/>
    <property type="match status" value="1"/>
</dbReference>
<dbReference type="Pfam" id="PF02580">
    <property type="entry name" value="Tyr_Deacylase"/>
    <property type="match status" value="1"/>
</dbReference>
<dbReference type="SUPFAM" id="SSF69500">
    <property type="entry name" value="DTD-like"/>
    <property type="match status" value="1"/>
</dbReference>
<gene>
    <name evidence="1" type="primary">dtd</name>
    <name type="ordered locus">Reut_A0477</name>
</gene>
<sequence length="156" mass="16545">MIALIQRVSQARVTVEGRTTGEIGAGLLALVCAERGDTEAQADRLLAKMLSYRVFSDADGKMNLPVQNMDGNGGAGGLLVVSQFTLAADTNSGTRPSFTPAASPEDGRRLYGYFVERARASHPDVQTGEFGAMMQVSLTNDGPVTFWLRVPPPGNA</sequence>
<keyword id="KW-0963">Cytoplasm</keyword>
<keyword id="KW-0378">Hydrolase</keyword>
<keyword id="KW-0694">RNA-binding</keyword>
<keyword id="KW-0820">tRNA-binding</keyword>
<accession>Q475S4</accession>
<organism>
    <name type="scientific">Cupriavidus pinatubonensis (strain JMP 134 / LMG 1197)</name>
    <name type="common">Cupriavidus necator (strain JMP 134)</name>
    <dbReference type="NCBI Taxonomy" id="264198"/>
    <lineage>
        <taxon>Bacteria</taxon>
        <taxon>Pseudomonadati</taxon>
        <taxon>Pseudomonadota</taxon>
        <taxon>Betaproteobacteria</taxon>
        <taxon>Burkholderiales</taxon>
        <taxon>Burkholderiaceae</taxon>
        <taxon>Cupriavidus</taxon>
    </lineage>
</organism>
<name>DTD_CUPPJ</name>